<proteinExistence type="evidence at protein level"/>
<dbReference type="EC" id="2.7.11.1"/>
<dbReference type="EC" id="2.7.10.2"/>
<dbReference type="EMBL" id="AJ005790">
    <property type="protein sequence ID" value="CAA06699.1"/>
    <property type="molecule type" value="mRNA"/>
</dbReference>
<dbReference type="EMBL" id="AB017197">
    <property type="protein sequence ID" value="BAA74457.1"/>
    <property type="molecule type" value="mRNA"/>
</dbReference>
<dbReference type="EMBL" id="AF089869">
    <property type="protein sequence ID" value="AAC98502.1"/>
    <property type="molecule type" value="mRNA"/>
</dbReference>
<dbReference type="EMBL" id="AF062076">
    <property type="protein sequence ID" value="AAD02811.1"/>
    <property type="molecule type" value="mRNA"/>
</dbReference>
<dbReference type="EMBL" id="AB022285">
    <property type="protein sequence ID" value="BAA89662.1"/>
    <property type="molecule type" value="Genomic_DNA"/>
</dbReference>
<dbReference type="EMBL" id="AB022179">
    <property type="protein sequence ID" value="BAA89499.1"/>
    <property type="molecule type" value="mRNA"/>
</dbReference>
<dbReference type="EMBL" id="AK149539">
    <property type="protein sequence ID" value="BAE28946.1"/>
    <property type="molecule type" value="mRNA"/>
</dbReference>
<dbReference type="EMBL" id="CH466548">
    <property type="protein sequence ID" value="EDL00383.1"/>
    <property type="molecule type" value="Genomic_DNA"/>
</dbReference>
<dbReference type="EMBL" id="CH466548">
    <property type="protein sequence ID" value="EDL00384.1"/>
    <property type="molecule type" value="Genomic_DNA"/>
</dbReference>
<dbReference type="EMBL" id="CH466548">
    <property type="protein sequence ID" value="EDL00386.1"/>
    <property type="molecule type" value="Genomic_DNA"/>
</dbReference>
<dbReference type="EMBL" id="BC028999">
    <property type="protein sequence ID" value="AAH28999.1"/>
    <property type="molecule type" value="mRNA"/>
</dbReference>
<dbReference type="CCDS" id="CCDS15067.1"/>
<dbReference type="RefSeq" id="NP_001264921.1">
    <property type="nucleotide sequence ID" value="NM_001277992.1"/>
</dbReference>
<dbReference type="RefSeq" id="NP_035624.3">
    <property type="nucleotide sequence ID" value="NM_011494.5"/>
</dbReference>
<dbReference type="RefSeq" id="XP_006496524.1">
    <property type="nucleotide sequence ID" value="XM_006496461.3"/>
</dbReference>
<dbReference type="SMR" id="O88697"/>
<dbReference type="BioGRID" id="203544">
    <property type="interactions" value="3"/>
</dbReference>
<dbReference type="FunCoup" id="O88697">
    <property type="interactions" value="3721"/>
</dbReference>
<dbReference type="STRING" id="10090.ENSMUSP00000027401"/>
<dbReference type="PhosphoSitePlus" id="O88697"/>
<dbReference type="SwissPalm" id="O88697"/>
<dbReference type="PaxDb" id="10090-ENSMUSP00000027401"/>
<dbReference type="PeptideAtlas" id="O88697"/>
<dbReference type="ProteomicsDB" id="257092"/>
<dbReference type="Pumba" id="O88697"/>
<dbReference type="Antibodypedia" id="34316">
    <property type="antibodies" value="279 antibodies from 26 providers"/>
</dbReference>
<dbReference type="DNASU" id="20872"/>
<dbReference type="Ensembl" id="ENSMUST00000027401.11">
    <property type="protein sequence ID" value="ENSMUSP00000027401.5"/>
    <property type="gene ID" value="ENSMUSG00000026201.13"/>
</dbReference>
<dbReference type="GeneID" id="20872"/>
<dbReference type="KEGG" id="mmu:20872"/>
<dbReference type="UCSC" id="uc007boh.2">
    <property type="organism name" value="mouse"/>
</dbReference>
<dbReference type="AGR" id="MGI:1313271"/>
<dbReference type="CTD" id="8576"/>
<dbReference type="MGI" id="MGI:1313271">
    <property type="gene designation" value="Stk16"/>
</dbReference>
<dbReference type="VEuPathDB" id="HostDB:ENSMUSG00000026201"/>
<dbReference type="eggNOG" id="KOG2345">
    <property type="taxonomic scope" value="Eukaryota"/>
</dbReference>
<dbReference type="GeneTree" id="ENSGT00550000075037"/>
<dbReference type="InParanoid" id="O88697"/>
<dbReference type="OMA" id="AMHQYKV"/>
<dbReference type="OrthoDB" id="248923at2759"/>
<dbReference type="PhylomeDB" id="O88697"/>
<dbReference type="TreeFam" id="TF350433"/>
<dbReference type="BRENDA" id="2.7.11.1">
    <property type="organism ID" value="3474"/>
</dbReference>
<dbReference type="BioGRID-ORCS" id="20872">
    <property type="hits" value="1 hit in 80 CRISPR screens"/>
</dbReference>
<dbReference type="ChiTaRS" id="Stk16">
    <property type="organism name" value="mouse"/>
</dbReference>
<dbReference type="PRO" id="PR:O88697"/>
<dbReference type="Proteomes" id="UP000000589">
    <property type="component" value="Chromosome 1"/>
</dbReference>
<dbReference type="RNAct" id="O88697">
    <property type="molecule type" value="protein"/>
</dbReference>
<dbReference type="Bgee" id="ENSMUSG00000026201">
    <property type="expression patterns" value="Expressed in right kidney and 274 other cell types or tissues"/>
</dbReference>
<dbReference type="ExpressionAtlas" id="O88697">
    <property type="expression patterns" value="baseline and differential"/>
</dbReference>
<dbReference type="GO" id="GO:0005829">
    <property type="term" value="C:cytosol"/>
    <property type="evidence" value="ECO:0007669"/>
    <property type="project" value="Ensembl"/>
</dbReference>
<dbReference type="GO" id="GO:0005794">
    <property type="term" value="C:Golgi apparatus"/>
    <property type="evidence" value="ECO:0000314"/>
    <property type="project" value="GO_Central"/>
</dbReference>
<dbReference type="GO" id="GO:0005798">
    <property type="term" value="C:Golgi-associated vesicle"/>
    <property type="evidence" value="ECO:0000314"/>
    <property type="project" value="GO_Central"/>
</dbReference>
<dbReference type="GO" id="GO:0016604">
    <property type="term" value="C:nuclear body"/>
    <property type="evidence" value="ECO:0007669"/>
    <property type="project" value="Ensembl"/>
</dbReference>
<dbReference type="GO" id="GO:0048471">
    <property type="term" value="C:perinuclear region of cytoplasm"/>
    <property type="evidence" value="ECO:0007669"/>
    <property type="project" value="UniProtKB-SubCell"/>
</dbReference>
<dbReference type="GO" id="GO:0005886">
    <property type="term" value="C:plasma membrane"/>
    <property type="evidence" value="ECO:0007669"/>
    <property type="project" value="Ensembl"/>
</dbReference>
<dbReference type="GO" id="GO:0005524">
    <property type="term" value="F:ATP binding"/>
    <property type="evidence" value="ECO:0007669"/>
    <property type="project" value="UniProtKB-KW"/>
</dbReference>
<dbReference type="GO" id="GO:0004715">
    <property type="term" value="F:non-membrane spanning protein tyrosine kinase activity"/>
    <property type="evidence" value="ECO:0007669"/>
    <property type="project" value="UniProtKB-EC"/>
</dbReference>
<dbReference type="GO" id="GO:0106310">
    <property type="term" value="F:protein serine kinase activity"/>
    <property type="evidence" value="ECO:0007669"/>
    <property type="project" value="RHEA"/>
</dbReference>
<dbReference type="GO" id="GO:0004674">
    <property type="term" value="F:protein serine/threonine kinase activity"/>
    <property type="evidence" value="ECO:0000314"/>
    <property type="project" value="UniProtKB"/>
</dbReference>
<dbReference type="GO" id="GO:0000978">
    <property type="term" value="F:RNA polymerase II cis-regulatory region sequence-specific DNA binding"/>
    <property type="evidence" value="ECO:0007669"/>
    <property type="project" value="Ensembl"/>
</dbReference>
<dbReference type="GO" id="GO:0071560">
    <property type="term" value="P:cellular response to transforming growth factor beta stimulus"/>
    <property type="evidence" value="ECO:0007669"/>
    <property type="project" value="Ensembl"/>
</dbReference>
<dbReference type="GO" id="GO:0045944">
    <property type="term" value="P:positive regulation of transcription by RNA polymerase II"/>
    <property type="evidence" value="ECO:0007669"/>
    <property type="project" value="Ensembl"/>
</dbReference>
<dbReference type="GO" id="GO:0046777">
    <property type="term" value="P:protein autophosphorylation"/>
    <property type="evidence" value="ECO:0000314"/>
    <property type="project" value="UniProtKB"/>
</dbReference>
<dbReference type="GO" id="GO:0006468">
    <property type="term" value="P:protein phosphorylation"/>
    <property type="evidence" value="ECO:0000314"/>
    <property type="project" value="UniProtKB"/>
</dbReference>
<dbReference type="CDD" id="cd13986">
    <property type="entry name" value="STKc_16"/>
    <property type="match status" value="1"/>
</dbReference>
<dbReference type="FunFam" id="1.10.510.10:FF:000396">
    <property type="entry name" value="Serine/threonine-protein kinase 16"/>
    <property type="match status" value="1"/>
</dbReference>
<dbReference type="FunFam" id="3.30.200.20:FF:000297">
    <property type="entry name" value="serine/threonine-protein kinase 16"/>
    <property type="match status" value="1"/>
</dbReference>
<dbReference type="Gene3D" id="3.30.200.20">
    <property type="entry name" value="Phosphorylase Kinase, domain 1"/>
    <property type="match status" value="1"/>
</dbReference>
<dbReference type="Gene3D" id="1.10.510.10">
    <property type="entry name" value="Transferase(Phosphotransferase) domain 1"/>
    <property type="match status" value="1"/>
</dbReference>
<dbReference type="InterPro" id="IPR011009">
    <property type="entry name" value="Kinase-like_dom_sf"/>
</dbReference>
<dbReference type="InterPro" id="IPR000719">
    <property type="entry name" value="Prot_kinase_dom"/>
</dbReference>
<dbReference type="InterPro" id="IPR052239">
    <property type="entry name" value="Ser/Thr-specific_kinases"/>
</dbReference>
<dbReference type="InterPro" id="IPR008271">
    <property type="entry name" value="Ser/Thr_kinase_AS"/>
</dbReference>
<dbReference type="PANTHER" id="PTHR45998">
    <property type="entry name" value="SERINE/THREONINE-PROTEIN KINASE 16"/>
    <property type="match status" value="1"/>
</dbReference>
<dbReference type="PANTHER" id="PTHR45998:SF2">
    <property type="entry name" value="SERINE_THREONINE-PROTEIN KINASE 16"/>
    <property type="match status" value="1"/>
</dbReference>
<dbReference type="Pfam" id="PF00069">
    <property type="entry name" value="Pkinase"/>
    <property type="match status" value="1"/>
</dbReference>
<dbReference type="PIRSF" id="PIRSF000654">
    <property type="entry name" value="Integrin-linked_kinase"/>
    <property type="match status" value="1"/>
</dbReference>
<dbReference type="SMART" id="SM00220">
    <property type="entry name" value="S_TKc"/>
    <property type="match status" value="1"/>
</dbReference>
<dbReference type="SUPFAM" id="SSF56112">
    <property type="entry name" value="Protein kinase-like (PK-like)"/>
    <property type="match status" value="1"/>
</dbReference>
<dbReference type="PROSITE" id="PS50011">
    <property type="entry name" value="PROTEIN_KINASE_DOM"/>
    <property type="match status" value="1"/>
</dbReference>
<dbReference type="PROSITE" id="PS00108">
    <property type="entry name" value="PROTEIN_KINASE_ST"/>
    <property type="match status" value="1"/>
</dbReference>
<reference key="1">
    <citation type="journal article" date="1998" name="Biochem. Biophys. Res. Commun.">
        <title>Cloning, expression analysis, and functional characterization of PKL12, a member of a new subfamily of ser/thr kinases.</title>
        <authorList>
            <person name="Ligos J.M."/>
            <person name="Gerwin N."/>
            <person name="Fernandez P."/>
            <person name="Gutierrez-Ramos J.-C."/>
            <person name="Bernad A."/>
        </authorList>
    </citation>
    <scope>NUCLEOTIDE SEQUENCE [MRNA]</scope>
    <scope>SUBCELLULAR LOCATION</scope>
    <scope>AUTOPHOSPHORYLATION</scope>
    <scope>DEVELOPMENTAL STAGE</scope>
    <scope>TISSUE SPECIFICITY</scope>
</reference>
<reference key="2">
    <citation type="journal article" date="1998" name="Biochim. Biophys. Acta">
        <title>Molecular cloning and characterization of a novel protein serine/threonine kinase highly expressed in mouse embryo.</title>
        <authorList>
            <person name="Kurioka K."/>
            <person name="Nakagawa K."/>
            <person name="Denda K."/>
            <person name="Miyazawa K."/>
            <person name="Kitamura N."/>
        </authorList>
    </citation>
    <scope>NUCLEOTIDE SEQUENCE [MRNA]</scope>
    <scope>TISSUE SPECIFICITY</scope>
    <scope>FUNCTION</scope>
    <source>
        <tissue>Liver</tissue>
    </source>
</reference>
<reference key="3">
    <citation type="journal article" date="1998" name="Hum. Mol. Genet.">
        <title>Cloning and characterization of Krct, a member of a novel subfamily of serine/threonine kinases.</title>
        <authorList>
            <person name="Stairs D.B."/>
            <person name="Perry Gardner H."/>
            <person name="Ha S.I."/>
            <person name="Copeland N.G."/>
            <person name="Gilbert D.J."/>
            <person name="Jenkins N.A."/>
            <person name="Chodosh L.A."/>
        </authorList>
    </citation>
    <scope>NUCLEOTIDE SEQUENCE [MRNA]</scope>
    <source>
        <strain>FVB/NJ</strain>
        <tissue>Mammary gland</tissue>
    </source>
</reference>
<reference key="4">
    <citation type="journal article" date="1999" name="Biochem. Biophys. Res. Commun.">
        <title>Identification and characterization of a myristylated and palmitylated serine/threonine protein kinase.</title>
        <authorList>
            <person name="Berson A.E."/>
            <person name="Young C."/>
            <person name="Morrison S.L."/>
            <person name="Fujii G.H."/>
            <person name="Sheung J."/>
            <person name="Wu B."/>
            <person name="Bolen J.B."/>
            <person name="Burkhardt A.L."/>
        </authorList>
    </citation>
    <scope>NUCLEOTIDE SEQUENCE [MRNA]</scope>
</reference>
<reference key="5">
    <citation type="journal article" date="2000" name="Biochem. J.">
        <title>A novel transcriptional factor with Ser/Thr kinase activity involved in the transforming growth factor (TGF)-beta signalling pathway.</title>
        <authorList>
            <person name="Ohta S."/>
            <person name="Takeuchi M."/>
            <person name="Deguchi M."/>
            <person name="Tsuji T."/>
            <person name="Gahara Y."/>
            <person name="Nagata K."/>
        </authorList>
    </citation>
    <scope>NUCLEOTIDE SEQUENCE [GENOMIC DNA / MRNA]</scope>
    <source>
        <strain>129/SvJ</strain>
    </source>
</reference>
<reference key="6">
    <citation type="journal article" date="2005" name="Science">
        <title>The transcriptional landscape of the mammalian genome.</title>
        <authorList>
            <person name="Carninci P."/>
            <person name="Kasukawa T."/>
            <person name="Katayama S."/>
            <person name="Gough J."/>
            <person name="Frith M.C."/>
            <person name="Maeda N."/>
            <person name="Oyama R."/>
            <person name="Ravasi T."/>
            <person name="Lenhard B."/>
            <person name="Wells C."/>
            <person name="Kodzius R."/>
            <person name="Shimokawa K."/>
            <person name="Bajic V.B."/>
            <person name="Brenner S.E."/>
            <person name="Batalov S."/>
            <person name="Forrest A.R."/>
            <person name="Zavolan M."/>
            <person name="Davis M.J."/>
            <person name="Wilming L.G."/>
            <person name="Aidinis V."/>
            <person name="Allen J.E."/>
            <person name="Ambesi-Impiombato A."/>
            <person name="Apweiler R."/>
            <person name="Aturaliya R.N."/>
            <person name="Bailey T.L."/>
            <person name="Bansal M."/>
            <person name="Baxter L."/>
            <person name="Beisel K.W."/>
            <person name="Bersano T."/>
            <person name="Bono H."/>
            <person name="Chalk A.M."/>
            <person name="Chiu K.P."/>
            <person name="Choudhary V."/>
            <person name="Christoffels A."/>
            <person name="Clutterbuck D.R."/>
            <person name="Crowe M.L."/>
            <person name="Dalla E."/>
            <person name="Dalrymple B.P."/>
            <person name="de Bono B."/>
            <person name="Della Gatta G."/>
            <person name="di Bernardo D."/>
            <person name="Down T."/>
            <person name="Engstrom P."/>
            <person name="Fagiolini M."/>
            <person name="Faulkner G."/>
            <person name="Fletcher C.F."/>
            <person name="Fukushima T."/>
            <person name="Furuno M."/>
            <person name="Futaki S."/>
            <person name="Gariboldi M."/>
            <person name="Georgii-Hemming P."/>
            <person name="Gingeras T.R."/>
            <person name="Gojobori T."/>
            <person name="Green R.E."/>
            <person name="Gustincich S."/>
            <person name="Harbers M."/>
            <person name="Hayashi Y."/>
            <person name="Hensch T.K."/>
            <person name="Hirokawa N."/>
            <person name="Hill D."/>
            <person name="Huminiecki L."/>
            <person name="Iacono M."/>
            <person name="Ikeo K."/>
            <person name="Iwama A."/>
            <person name="Ishikawa T."/>
            <person name="Jakt M."/>
            <person name="Kanapin A."/>
            <person name="Katoh M."/>
            <person name="Kawasawa Y."/>
            <person name="Kelso J."/>
            <person name="Kitamura H."/>
            <person name="Kitano H."/>
            <person name="Kollias G."/>
            <person name="Krishnan S.P."/>
            <person name="Kruger A."/>
            <person name="Kummerfeld S.K."/>
            <person name="Kurochkin I.V."/>
            <person name="Lareau L.F."/>
            <person name="Lazarevic D."/>
            <person name="Lipovich L."/>
            <person name="Liu J."/>
            <person name="Liuni S."/>
            <person name="McWilliam S."/>
            <person name="Madan Babu M."/>
            <person name="Madera M."/>
            <person name="Marchionni L."/>
            <person name="Matsuda H."/>
            <person name="Matsuzawa S."/>
            <person name="Miki H."/>
            <person name="Mignone F."/>
            <person name="Miyake S."/>
            <person name="Morris K."/>
            <person name="Mottagui-Tabar S."/>
            <person name="Mulder N."/>
            <person name="Nakano N."/>
            <person name="Nakauchi H."/>
            <person name="Ng P."/>
            <person name="Nilsson R."/>
            <person name="Nishiguchi S."/>
            <person name="Nishikawa S."/>
            <person name="Nori F."/>
            <person name="Ohara O."/>
            <person name="Okazaki Y."/>
            <person name="Orlando V."/>
            <person name="Pang K.C."/>
            <person name="Pavan W.J."/>
            <person name="Pavesi G."/>
            <person name="Pesole G."/>
            <person name="Petrovsky N."/>
            <person name="Piazza S."/>
            <person name="Reed J."/>
            <person name="Reid J.F."/>
            <person name="Ring B.Z."/>
            <person name="Ringwald M."/>
            <person name="Rost B."/>
            <person name="Ruan Y."/>
            <person name="Salzberg S.L."/>
            <person name="Sandelin A."/>
            <person name="Schneider C."/>
            <person name="Schoenbach C."/>
            <person name="Sekiguchi K."/>
            <person name="Semple C.A."/>
            <person name="Seno S."/>
            <person name="Sessa L."/>
            <person name="Sheng Y."/>
            <person name="Shibata Y."/>
            <person name="Shimada H."/>
            <person name="Shimada K."/>
            <person name="Silva D."/>
            <person name="Sinclair B."/>
            <person name="Sperling S."/>
            <person name="Stupka E."/>
            <person name="Sugiura K."/>
            <person name="Sultana R."/>
            <person name="Takenaka Y."/>
            <person name="Taki K."/>
            <person name="Tammoja K."/>
            <person name="Tan S.L."/>
            <person name="Tang S."/>
            <person name="Taylor M.S."/>
            <person name="Tegner J."/>
            <person name="Teichmann S.A."/>
            <person name="Ueda H.R."/>
            <person name="van Nimwegen E."/>
            <person name="Verardo R."/>
            <person name="Wei C.L."/>
            <person name="Yagi K."/>
            <person name="Yamanishi H."/>
            <person name="Zabarovsky E."/>
            <person name="Zhu S."/>
            <person name="Zimmer A."/>
            <person name="Hide W."/>
            <person name="Bult C."/>
            <person name="Grimmond S.M."/>
            <person name="Teasdale R.D."/>
            <person name="Liu E.T."/>
            <person name="Brusic V."/>
            <person name="Quackenbush J."/>
            <person name="Wahlestedt C."/>
            <person name="Mattick J.S."/>
            <person name="Hume D.A."/>
            <person name="Kai C."/>
            <person name="Sasaki D."/>
            <person name="Tomaru Y."/>
            <person name="Fukuda S."/>
            <person name="Kanamori-Katayama M."/>
            <person name="Suzuki M."/>
            <person name="Aoki J."/>
            <person name="Arakawa T."/>
            <person name="Iida J."/>
            <person name="Imamura K."/>
            <person name="Itoh M."/>
            <person name="Kato T."/>
            <person name="Kawaji H."/>
            <person name="Kawagashira N."/>
            <person name="Kawashima T."/>
            <person name="Kojima M."/>
            <person name="Kondo S."/>
            <person name="Konno H."/>
            <person name="Nakano K."/>
            <person name="Ninomiya N."/>
            <person name="Nishio T."/>
            <person name="Okada M."/>
            <person name="Plessy C."/>
            <person name="Shibata K."/>
            <person name="Shiraki T."/>
            <person name="Suzuki S."/>
            <person name="Tagami M."/>
            <person name="Waki K."/>
            <person name="Watahiki A."/>
            <person name="Okamura-Oho Y."/>
            <person name="Suzuki H."/>
            <person name="Kawai J."/>
            <person name="Hayashizaki Y."/>
        </authorList>
    </citation>
    <scope>NUCLEOTIDE SEQUENCE [LARGE SCALE MRNA]</scope>
    <source>
        <strain>C57BL/6J</strain>
        <tissue>Liver</tissue>
    </source>
</reference>
<reference key="7">
    <citation type="submission" date="2005-07" db="EMBL/GenBank/DDBJ databases">
        <authorList>
            <person name="Mural R.J."/>
            <person name="Adams M.D."/>
            <person name="Myers E.W."/>
            <person name="Smith H.O."/>
            <person name="Venter J.C."/>
        </authorList>
    </citation>
    <scope>NUCLEOTIDE SEQUENCE [LARGE SCALE GENOMIC DNA]</scope>
</reference>
<reference key="8">
    <citation type="journal article" date="2004" name="Genome Res.">
        <title>The status, quality, and expansion of the NIH full-length cDNA project: the Mammalian Gene Collection (MGC).</title>
        <authorList>
            <consortium name="The MGC Project Team"/>
        </authorList>
    </citation>
    <scope>NUCLEOTIDE SEQUENCE [LARGE SCALE MRNA]</scope>
    <source>
        <strain>C57BL/6J</strain>
        <tissue>Mammary gland</tissue>
    </source>
</reference>
<reference key="9">
    <citation type="journal article" date="2010" name="Cell">
        <title>A tissue-specific atlas of mouse protein phosphorylation and expression.</title>
        <authorList>
            <person name="Huttlin E.L."/>
            <person name="Jedrychowski M.P."/>
            <person name="Elias J.E."/>
            <person name="Goswami T."/>
            <person name="Rad R."/>
            <person name="Beausoleil S.A."/>
            <person name="Villen J."/>
            <person name="Haas W."/>
            <person name="Sowa M.E."/>
            <person name="Gygi S.P."/>
        </authorList>
    </citation>
    <scope>IDENTIFICATION BY MASS SPECTROMETRY [LARGE SCALE ANALYSIS]</scope>
    <source>
        <tissue>Brown adipose tissue</tissue>
        <tissue>Kidney</tissue>
        <tissue>Liver</tissue>
        <tissue>Lung</tissue>
        <tissue>Spleen</tissue>
        <tissue>Testis</tissue>
    </source>
</reference>
<evidence type="ECO:0000250" key="1"/>
<evidence type="ECO:0000250" key="2">
    <source>
        <dbReference type="UniProtKB" id="O75716"/>
    </source>
</evidence>
<evidence type="ECO:0000255" key="3">
    <source>
        <dbReference type="PROSITE-ProRule" id="PRU00159"/>
    </source>
</evidence>
<evidence type="ECO:0000255" key="4">
    <source>
        <dbReference type="PROSITE-ProRule" id="PRU10027"/>
    </source>
</evidence>
<evidence type="ECO:0000269" key="5">
    <source>
    </source>
</evidence>
<evidence type="ECO:0000269" key="6">
    <source>
    </source>
</evidence>
<evidence type="ECO:0000305" key="7"/>
<gene>
    <name type="primary">Stk16</name>
    <name type="synonym">Edpk</name>
    <name type="synonym">Krct</name>
    <name type="synonym">Mpsk1</name>
    <name type="synonym">Pkl12</name>
    <name type="synonym">Tsf1</name>
</gene>
<keyword id="KW-0067">ATP-binding</keyword>
<keyword id="KW-0963">Cytoplasm</keyword>
<keyword id="KW-0418">Kinase</keyword>
<keyword id="KW-0449">Lipoprotein</keyword>
<keyword id="KW-0472">Membrane</keyword>
<keyword id="KW-0519">Myristate</keyword>
<keyword id="KW-0547">Nucleotide-binding</keyword>
<keyword id="KW-0564">Palmitate</keyword>
<keyword id="KW-0597">Phosphoprotein</keyword>
<keyword id="KW-1185">Reference proteome</keyword>
<keyword id="KW-0723">Serine/threonine-protein kinase</keyword>
<keyword id="KW-0808">Transferase</keyword>
<feature type="initiator methionine" description="Removed" evidence="2">
    <location>
        <position position="1"/>
    </location>
</feature>
<feature type="chain" id="PRO_0000086702" description="Serine/threonine-protein kinase 16">
    <location>
        <begin position="2"/>
        <end position="305"/>
    </location>
</feature>
<feature type="domain" description="Protein kinase" evidence="3">
    <location>
        <begin position="20"/>
        <end position="293"/>
    </location>
</feature>
<feature type="region of interest" description="Activation loop" evidence="1">
    <location>
        <begin position="166"/>
        <end position="202"/>
    </location>
</feature>
<feature type="active site" description="Proton acceptor" evidence="3 4">
    <location>
        <position position="148"/>
    </location>
</feature>
<feature type="binding site" evidence="3">
    <location>
        <begin position="26"/>
        <end position="34"/>
    </location>
    <ligand>
        <name>ATP</name>
        <dbReference type="ChEBI" id="CHEBI:30616"/>
    </ligand>
</feature>
<feature type="binding site" evidence="3">
    <location>
        <position position="49"/>
    </location>
    <ligand>
        <name>ATP</name>
        <dbReference type="ChEBI" id="CHEBI:30616"/>
    </ligand>
</feature>
<feature type="modified residue" description="Phosphoserine; by autocatalysis" evidence="2">
    <location>
        <position position="197"/>
    </location>
</feature>
<feature type="modified residue" description="Phosphotyrosine; by autocatalysis" evidence="2">
    <location>
        <position position="198"/>
    </location>
</feature>
<feature type="lipid moiety-binding region" description="N-myristoyl glycine" evidence="1">
    <location>
        <position position="2"/>
    </location>
</feature>
<feature type="lipid moiety-binding region" description="S-palmitoyl cysteine" evidence="1">
    <location>
        <position position="6"/>
    </location>
</feature>
<feature type="lipid moiety-binding region" description="S-palmitoyl cysteine" evidence="1">
    <location>
        <position position="8"/>
    </location>
</feature>
<feature type="sequence conflict" description="In Ref. 5; BAA89662 and 6; BAA89499." evidence="7" ref="5 6">
    <original>KLGE</original>
    <variation>EIGG</variation>
    <location>
        <begin position="25"/>
        <end position="28"/>
    </location>
</feature>
<feature type="sequence conflict" description="In Ref. 6; BAA89499." evidence="7" ref="6">
    <original>T</original>
    <variation>A</variation>
    <location>
        <position position="195"/>
    </location>
</feature>
<feature type="sequence conflict" description="In Ref. 4; AAD02811." evidence="7" ref="4">
    <original>QL</original>
    <variation>HV</variation>
    <location>
        <begin position="267"/>
        <end position="268"/>
    </location>
</feature>
<comment type="function">
    <text evidence="1 6">Membrane-associated protein kinase that phosphorylates on serine and threonine residues. In vitro substrates include DRG1, ENO1 and EIF4EBP1. Also autophosphorylates (By similarity). May be involved in secretory vesicle trafficking or intracellular signaling. May have a role in regulating stromal-epithelial interactions that occur during ductal morphogenesis in the mammary gland. May be involved in TGF-beta signaling. Able to autophosphorylate on Tyr residue; it is however unclear whether it has tyrosine-protein kinase toward other proteins.</text>
</comment>
<comment type="catalytic activity">
    <reaction>
        <text>L-seryl-[protein] + ATP = O-phospho-L-seryl-[protein] + ADP + H(+)</text>
        <dbReference type="Rhea" id="RHEA:17989"/>
        <dbReference type="Rhea" id="RHEA-COMP:9863"/>
        <dbReference type="Rhea" id="RHEA-COMP:11604"/>
        <dbReference type="ChEBI" id="CHEBI:15378"/>
        <dbReference type="ChEBI" id="CHEBI:29999"/>
        <dbReference type="ChEBI" id="CHEBI:30616"/>
        <dbReference type="ChEBI" id="CHEBI:83421"/>
        <dbReference type="ChEBI" id="CHEBI:456216"/>
        <dbReference type="EC" id="2.7.11.1"/>
    </reaction>
</comment>
<comment type="catalytic activity">
    <reaction>
        <text>L-threonyl-[protein] + ATP = O-phospho-L-threonyl-[protein] + ADP + H(+)</text>
        <dbReference type="Rhea" id="RHEA:46608"/>
        <dbReference type="Rhea" id="RHEA-COMP:11060"/>
        <dbReference type="Rhea" id="RHEA-COMP:11605"/>
        <dbReference type="ChEBI" id="CHEBI:15378"/>
        <dbReference type="ChEBI" id="CHEBI:30013"/>
        <dbReference type="ChEBI" id="CHEBI:30616"/>
        <dbReference type="ChEBI" id="CHEBI:61977"/>
        <dbReference type="ChEBI" id="CHEBI:456216"/>
        <dbReference type="EC" id="2.7.11.1"/>
    </reaction>
</comment>
<comment type="catalytic activity">
    <reaction evidence="4">
        <text>L-tyrosyl-[protein] + ATP = O-phospho-L-tyrosyl-[protein] + ADP + H(+)</text>
        <dbReference type="Rhea" id="RHEA:10596"/>
        <dbReference type="Rhea" id="RHEA-COMP:10136"/>
        <dbReference type="Rhea" id="RHEA-COMP:20101"/>
        <dbReference type="ChEBI" id="CHEBI:15378"/>
        <dbReference type="ChEBI" id="CHEBI:30616"/>
        <dbReference type="ChEBI" id="CHEBI:46858"/>
        <dbReference type="ChEBI" id="CHEBI:61978"/>
        <dbReference type="ChEBI" id="CHEBI:456216"/>
        <dbReference type="EC" id="2.7.10.2"/>
    </reaction>
</comment>
<comment type="subunit">
    <text evidence="1">Monomer. Interacts with DRG1 (via its N-terminal); the interaction phosphorylates DRG1.</text>
</comment>
<comment type="subcellular location">
    <subcellularLocation>
        <location evidence="5">Cytoplasm</location>
        <location evidence="5">Perinuclear region</location>
    </subcellularLocation>
    <subcellularLocation>
        <location evidence="1">Membrane</location>
        <topology evidence="1">Lipid-anchor</topology>
    </subcellularLocation>
    <text>Associates with Golgi and Golgi-derived vesicles.</text>
</comment>
<comment type="tissue specificity">
    <text evidence="5 6">Ubiquitously expressed at low levels. Relatively higher levels in testis, kidney and liver.</text>
</comment>
<comment type="developmental stage">
    <text evidence="5">Expressed at all stages of developing embryo.</text>
</comment>
<comment type="PTM">
    <text evidence="1">Mainly autophosphorylated on serine/threonine residues. Also autophosphorylated on Tyr-198 (By similarity).</text>
</comment>
<comment type="similarity">
    <text evidence="3">Belongs to the protein kinase superfamily. Ser/Thr protein kinase family.</text>
</comment>
<name>STK16_MOUSE</name>
<sequence length="305" mass="34382">MGHALCVCSRGTVIIDNKRYLFVQKLGEGGFSYVDLVEGLHDGHFYALKRILCHEQQDQEEAQREAEMHRLFQHPNILRLMAYSLKERGAKHEAWLLLPFFKKGTLWNEIERLKDQGSFLTEDQILPLLLGISRGLEAIHAKGYAHRDLKPTNILLGDEGQPVLMDLGSMNQACIQVEGSRQALALQDWAAQRCTISYRAPELFSVQSHCVIDERTDVWSLGCVLYAMMFGEGPYDMVFQKGDSVALAVQNELSIPQSPRHSSALRQLLSSMMTVDPQQRPHIPVLLSQLEALQPPAPGQHTTQI</sequence>
<accession>O88697</accession>
<accession>Q3UEG5</accession>
<accession>Q9JMJ0</accession>
<accession>Q9JMJ1</accession>
<accession>Q9QX00</accession>
<organism>
    <name type="scientific">Mus musculus</name>
    <name type="common">Mouse</name>
    <dbReference type="NCBI Taxonomy" id="10090"/>
    <lineage>
        <taxon>Eukaryota</taxon>
        <taxon>Metazoa</taxon>
        <taxon>Chordata</taxon>
        <taxon>Craniata</taxon>
        <taxon>Vertebrata</taxon>
        <taxon>Euteleostomi</taxon>
        <taxon>Mammalia</taxon>
        <taxon>Eutheria</taxon>
        <taxon>Euarchontoglires</taxon>
        <taxon>Glires</taxon>
        <taxon>Rodentia</taxon>
        <taxon>Myomorpha</taxon>
        <taxon>Muroidea</taxon>
        <taxon>Muridae</taxon>
        <taxon>Murinae</taxon>
        <taxon>Mus</taxon>
        <taxon>Mus</taxon>
    </lineage>
</organism>
<protein>
    <recommendedName>
        <fullName>Serine/threonine-protein kinase 16</fullName>
        <ecNumber>2.7.11.1</ecNumber>
    </recommendedName>
    <alternativeName>
        <fullName>Embryo-derived protein kinase</fullName>
        <shortName>Edpk</shortName>
    </alternativeName>
    <alternativeName>
        <fullName>Myristoylated and palmitoylated serine/threonine-protein kinase</fullName>
        <shortName>MPSK</shortName>
    </alternativeName>
    <alternativeName>
        <fullName>Protein kinase Krct</fullName>
    </alternativeName>
    <alternativeName>
        <fullName>Protein kinase PKL12</fullName>
    </alternativeName>
    <alternativeName>
        <fullName>TGF-beta-stimulated factor 1</fullName>
        <shortName>TSF-1</shortName>
    </alternativeName>
    <alternativeName>
        <fullName>Tyrosine-protein kinase STK16</fullName>
        <ecNumber>2.7.10.2</ecNumber>
    </alternativeName>
</protein>